<organism>
    <name type="scientific">Saccharomyces cerevisiae (strain ATCC 204508 / S288c)</name>
    <name type="common">Baker's yeast</name>
    <dbReference type="NCBI Taxonomy" id="559292"/>
    <lineage>
        <taxon>Eukaryota</taxon>
        <taxon>Fungi</taxon>
        <taxon>Dikarya</taxon>
        <taxon>Ascomycota</taxon>
        <taxon>Saccharomycotina</taxon>
        <taxon>Saccharomycetes</taxon>
        <taxon>Saccharomycetales</taxon>
        <taxon>Saccharomycetaceae</taxon>
        <taxon>Saccharomyces</taxon>
    </lineage>
</organism>
<accession>P03875</accession>
<accession>A0A0A7NYG1</accession>
<accession>Q9ZZX5</accession>
<name>AI1M_YEAST</name>
<feature type="chain" id="PRO_0000196880" description="Putative COX1/OXI3 intron 1 protein">
    <location>
        <begin position="1"/>
        <end position="834"/>
    </location>
</feature>
<feature type="domain" description="Reverse transcriptase" evidence="1">
    <location>
        <begin position="296"/>
        <end position="577"/>
    </location>
</feature>
<feature type="region of interest" description="Disordered" evidence="2">
    <location>
        <begin position="162"/>
        <end position="188"/>
    </location>
</feature>
<feature type="compositionally biased region" description="Polar residues" evidence="2">
    <location>
        <begin position="167"/>
        <end position="181"/>
    </location>
</feature>
<feature type="sequence conflict" description="In Ref. 1 and 2." evidence="3" ref="1 2">
    <original>F</original>
    <variation>N</variation>
    <location>
        <position position="118"/>
    </location>
</feature>
<comment type="subcellular location">
    <subcellularLocation>
        <location evidence="3">Mitochondrion</location>
    </subcellularLocation>
</comment>
<comment type="miscellaneous">
    <text>This protein is coded in group-II intron 1 of OXI3 (COX1).</text>
</comment>
<comment type="sequence caution" evidence="3">
    <conflict type="erroneous initiation">
        <sequence resource="EMBL-CDS" id="CAA24071"/>
    </conflict>
</comment>
<gene>
    <name type="primary">AI1</name>
    <name type="ordered locus">Q0050</name>
</gene>
<geneLocation type="mitochondrion"/>
<dbReference type="EMBL" id="V00694">
    <property type="protein sequence ID" value="CAA24071.1"/>
    <property type="status" value="ALT_INIT"/>
    <property type="molecule type" value="Genomic_DNA"/>
</dbReference>
<dbReference type="EMBL" id="L36897">
    <property type="protein sequence ID" value="AAA67532.1"/>
    <property type="molecule type" value="Genomic_DNA"/>
</dbReference>
<dbReference type="EMBL" id="KP263414">
    <property type="protein sequence ID" value="AIZ98886.1"/>
    <property type="molecule type" value="Genomic_DNA"/>
</dbReference>
<dbReference type="PIR" id="A04508">
    <property type="entry name" value="QXBY31"/>
</dbReference>
<dbReference type="PIR" id="S78642">
    <property type="entry name" value="S78642"/>
</dbReference>
<dbReference type="RefSeq" id="NP_009310.1">
    <property type="nucleotide sequence ID" value="NC_001224.1"/>
</dbReference>
<dbReference type="SMR" id="P03875"/>
<dbReference type="BioGRID" id="34785">
    <property type="interactions" value="7"/>
</dbReference>
<dbReference type="DIP" id="DIP-8242N"/>
<dbReference type="FunCoup" id="P03875">
    <property type="interactions" value="99"/>
</dbReference>
<dbReference type="IntAct" id="P03875">
    <property type="interactions" value="1"/>
</dbReference>
<dbReference type="MINT" id="P03875"/>
<dbReference type="STRING" id="4932.Q0050"/>
<dbReference type="REBASE" id="2622">
    <property type="entry name" value="I-SceIII"/>
</dbReference>
<dbReference type="REBASE" id="2956">
    <property type="entry name" value="I-SceVI"/>
</dbReference>
<dbReference type="PaxDb" id="4932-Q0050"/>
<dbReference type="PeptideAtlas" id="P03875"/>
<dbReference type="EnsemblFungi" id="Q0050_mRNA">
    <property type="protein sequence ID" value="Q0050"/>
    <property type="gene ID" value="Q0050"/>
</dbReference>
<dbReference type="GeneID" id="854593"/>
<dbReference type="KEGG" id="sce:Q0050"/>
<dbReference type="AGR" id="SGD:S000007261"/>
<dbReference type="SGD" id="S000007261">
    <property type="gene designation" value="AI1"/>
</dbReference>
<dbReference type="VEuPathDB" id="FungiDB:Q0050"/>
<dbReference type="eggNOG" id="KOG4768">
    <property type="taxonomic scope" value="Eukaryota"/>
</dbReference>
<dbReference type="GeneTree" id="ENSGT00730000113263"/>
<dbReference type="HOGENOM" id="CLU_013584_3_1_1"/>
<dbReference type="InParanoid" id="P03875"/>
<dbReference type="OMA" id="VFIRITI"/>
<dbReference type="OrthoDB" id="3594036at2759"/>
<dbReference type="BioCyc" id="YEAST:G3O-34372-MONOMER"/>
<dbReference type="BioGRID-ORCS" id="854593">
    <property type="hits" value="0 hits in 10 CRISPR screens"/>
</dbReference>
<dbReference type="PRO" id="PR:P03875"/>
<dbReference type="Proteomes" id="UP000002311">
    <property type="component" value="Mitochondrion"/>
</dbReference>
<dbReference type="RNAct" id="P03875">
    <property type="molecule type" value="protein"/>
</dbReference>
<dbReference type="GO" id="GO:0005739">
    <property type="term" value="C:mitochondrion"/>
    <property type="evidence" value="ECO:0000315"/>
    <property type="project" value="SGD"/>
</dbReference>
<dbReference type="GO" id="GO:0003964">
    <property type="term" value="F:RNA-directed DNA polymerase activity"/>
    <property type="evidence" value="ECO:0000315"/>
    <property type="project" value="SGD"/>
</dbReference>
<dbReference type="GO" id="GO:0006315">
    <property type="term" value="P:homing of group II introns"/>
    <property type="evidence" value="ECO:0000314"/>
    <property type="project" value="SGD"/>
</dbReference>
<dbReference type="GO" id="GO:0006397">
    <property type="term" value="P:mRNA processing"/>
    <property type="evidence" value="ECO:0000314"/>
    <property type="project" value="SGD"/>
</dbReference>
<dbReference type="GO" id="GO:0006278">
    <property type="term" value="P:RNA-templated DNA biosynthetic process"/>
    <property type="evidence" value="ECO:0000315"/>
    <property type="project" value="SGD"/>
</dbReference>
<dbReference type="CDD" id="cd00085">
    <property type="entry name" value="HNHc"/>
    <property type="match status" value="1"/>
</dbReference>
<dbReference type="CDD" id="cd01651">
    <property type="entry name" value="RT_G2_intron"/>
    <property type="match status" value="1"/>
</dbReference>
<dbReference type="Gene3D" id="1.20.210.10">
    <property type="entry name" value="Cytochrome c oxidase-like, subunit I domain"/>
    <property type="match status" value="1"/>
</dbReference>
<dbReference type="InterPro" id="IPR036927">
    <property type="entry name" value="Cyt_c_oxase-like_su1_sf"/>
</dbReference>
<dbReference type="InterPro" id="IPR043502">
    <property type="entry name" value="DNA/RNA_pol_sf"/>
</dbReference>
<dbReference type="InterPro" id="IPR024937">
    <property type="entry name" value="Domain_X"/>
</dbReference>
<dbReference type="InterPro" id="IPR003615">
    <property type="entry name" value="HNH_nuc"/>
</dbReference>
<dbReference type="InterPro" id="IPR000477">
    <property type="entry name" value="RT_dom"/>
</dbReference>
<dbReference type="PANTHER" id="PTHR33642">
    <property type="entry name" value="COX1/OXI3 INTRON 1 PROTEIN-RELATED"/>
    <property type="match status" value="1"/>
</dbReference>
<dbReference type="PANTHER" id="PTHR33642:SF4">
    <property type="entry name" value="COX1_OXI3 INTRON 1 PROTEIN-RELATED"/>
    <property type="match status" value="1"/>
</dbReference>
<dbReference type="Pfam" id="PF01348">
    <property type="entry name" value="Intron_maturas2"/>
    <property type="match status" value="1"/>
</dbReference>
<dbReference type="Pfam" id="PF00078">
    <property type="entry name" value="RVT_1"/>
    <property type="match status" value="1"/>
</dbReference>
<dbReference type="SMART" id="SM00507">
    <property type="entry name" value="HNHc"/>
    <property type="match status" value="1"/>
</dbReference>
<dbReference type="SUPFAM" id="SSF81442">
    <property type="entry name" value="Cytochrome c oxidase subunit I-like"/>
    <property type="match status" value="1"/>
</dbReference>
<dbReference type="SUPFAM" id="SSF56672">
    <property type="entry name" value="DNA/RNA polymerases"/>
    <property type="match status" value="1"/>
</dbReference>
<dbReference type="PROSITE" id="PS50878">
    <property type="entry name" value="RT_POL"/>
    <property type="match status" value="1"/>
</dbReference>
<protein>
    <recommendedName>
        <fullName>Putative COX1/OXI3 intron 1 protein</fullName>
    </recommendedName>
</protein>
<reference key="1">
    <citation type="journal article" date="1980" name="J. Biol. Chem.">
        <title>Assembly of the mitochondrial membrane system. Structure and nucleotide sequence of the gene coding for subunit 1 of yeast cytochrome oxidase.</title>
        <authorList>
            <person name="Bonitz S.G."/>
            <person name="Coruzzi G."/>
            <person name="Thalenfeld B.E."/>
            <person name="Tzagoloff A."/>
            <person name="Macino G."/>
        </authorList>
    </citation>
    <scope>NUCLEOTIDE SEQUENCE [GENOMIC DNA]</scope>
    <source>
        <strain>ATCC 24657 / D273-10B</strain>
    </source>
</reference>
<reference key="2">
    <citation type="journal article" date="1986" name="Gene">
        <title>The primary structure of the mitochondrial genome of Saccharomyces cerevisiae -- a review.</title>
        <authorList>
            <person name="de Zamaroczy M."/>
            <person name="Bernardi G."/>
        </authorList>
    </citation>
    <scope>NUCLEOTIDE SEQUENCE [GENOMIC DNA]</scope>
</reference>
<reference key="3">
    <citation type="journal article" date="1998" name="FEBS Lett.">
        <title>The complete sequence of the mitochondrial genome of Saccharomyces cerevisiae.</title>
        <authorList>
            <person name="Foury F."/>
            <person name="Roganti T."/>
            <person name="Lecrenier N."/>
            <person name="Purnelle B."/>
        </authorList>
    </citation>
    <scope>NUCLEOTIDE SEQUENCE [LARGE SCALE GENOMIC DNA]</scope>
    <source>
        <strain>ATCC 96604 / S288c / FY1679</strain>
    </source>
</reference>
<reference key="4">
    <citation type="journal article" date="2014" name="G3 (Bethesda)">
        <title>The reference genome sequence of Saccharomyces cerevisiae: Then and now.</title>
        <authorList>
            <person name="Engel S.R."/>
            <person name="Dietrich F.S."/>
            <person name="Fisk D.G."/>
            <person name="Binkley G."/>
            <person name="Balakrishnan R."/>
            <person name="Costanzo M.C."/>
            <person name="Dwight S.S."/>
            <person name="Hitz B.C."/>
            <person name="Karra K."/>
            <person name="Nash R.S."/>
            <person name="Weng S."/>
            <person name="Wong E.D."/>
            <person name="Lloyd P."/>
            <person name="Skrzypek M.S."/>
            <person name="Miyasato S.R."/>
            <person name="Simison M."/>
            <person name="Cherry J.M."/>
        </authorList>
    </citation>
    <scope>GENOME REANNOTATION</scope>
    <source>
        <strain>ATCC 96604 / S288c / FY1679</strain>
    </source>
</reference>
<evidence type="ECO:0000255" key="1">
    <source>
        <dbReference type="PROSITE-ProRule" id="PRU00405"/>
    </source>
</evidence>
<evidence type="ECO:0000256" key="2">
    <source>
        <dbReference type="SAM" id="MobiDB-lite"/>
    </source>
</evidence>
<evidence type="ECO:0000305" key="3"/>
<proteinExistence type="predicted"/>
<sequence>MVQRWLYSTNAKDIAVLYFMLAIFSGMAGTAMSLIIRLELAAPGSQYLHGNSQLFNGAPTSAYISLMRTALVLWIINRYLKHMTNSVGANFTGTMACHKTPMISVGGVKCYMVRLTNFLQVFIRITISSYHLDMVKQVWLFYVEVIRLWFIVLDSTGSVKKMKDTNNTKGNTKSEGSTERGNSGVDRGMVVPNTQMKMRFLNQVRYYSVNNNLKMGKDTNIELSKDTSTSDLLEFEKLVMDNMNEENMNNNLLSIMKNVDMLMLAYNRIKSKPGNMTPGTTLETLDGMNMMYLNKLSNELGTGKFKFKPMRMVNIPKPKGGMRPLSVGNPRDKIVQEVMRMILDTIFDKKMSTHSHGFRKNMSCQTAIWEVRNMFGGSNWFIEVDLKKCFDTISHDLIIKELKRYISDKGFIDLVYKLLRAGYIDEKGTYHKPMLGLPQGSLISPILCNIVMTLVDNWLEDYINLYNKGKVKKQHPTYKKLSRMIAKAKMFSTRLKLHKERAKGPTFIYNDPNFKRMKYVRYADDILIGVLGSKNDCKMIKRDLNNFLNSLGLTMNEEKTLITCATETPARFLGYNISITPLKRMPTVTKTIRGKTIRSRNTTRPIINAPIRDIINKLATNGYCKHNKNGRMGVPTRVGRWTYEEPRTIINNYKALGRGILNYYKLATNYKRLRERIYYVLYYSCVLTLASKYRLKTMSKTIKKFGYNLNIIENDKLIANFPRNTFDNIKKIENHGMFMYMSEAKVTDPFEYIDSIKYMLPTAKANFNKPCSICNSTIDVEMHHVKQLHRGMLKATKDYITGRMITMNRKQIPLCKQCHIKTHKNKFKNMGPGM</sequence>
<keyword id="KW-0496">Mitochondrion</keyword>
<keyword id="KW-1185">Reference proteome</keyword>